<accession>A0A4V1FW34</accession>
<feature type="signal peptide" evidence="2">
    <location>
        <begin position="1"/>
        <end position="17"/>
    </location>
</feature>
<feature type="chain" id="PRO_0000449435" description="Pyrichalasin C-7 hydroxylase">
    <location>
        <begin position="18"/>
        <end position="504"/>
    </location>
</feature>
<feature type="binding site" description="axial binding residue" evidence="1">
    <location>
        <position position="449"/>
    </location>
    <ligand>
        <name>heme</name>
        <dbReference type="ChEBI" id="CHEBI:30413"/>
    </ligand>
    <ligandPart>
        <name>Fe</name>
        <dbReference type="ChEBI" id="CHEBI:18248"/>
    </ligandPart>
</feature>
<evidence type="ECO:0000250" key="1">
    <source>
        <dbReference type="UniProtKB" id="P04798"/>
    </source>
</evidence>
<evidence type="ECO:0000255" key="2"/>
<evidence type="ECO:0000269" key="3">
    <source>
    </source>
</evidence>
<evidence type="ECO:0000269" key="4">
    <source>
    </source>
</evidence>
<evidence type="ECO:0000303" key="5">
    <source>
    </source>
</evidence>
<evidence type="ECO:0000305" key="6"/>
<evidence type="ECO:0000305" key="7">
    <source>
    </source>
</evidence>
<evidence type="ECO:0000305" key="8">
    <source>
    </source>
</evidence>
<protein>
    <recommendedName>
        <fullName evidence="5">Pyrichalasin C-7 hydroxylase</fullName>
        <ecNumber evidence="7">1.-.-.-</ecNumber>
    </recommendedName>
    <alternativeName>
        <fullName evidence="5">Cytochrome P450 monooxygenase pyiG</fullName>
    </alternativeName>
    <alternativeName>
        <fullName evidence="5">Pyrichalasin H biosynthesis cluster protein G</fullName>
    </alternativeName>
</protein>
<proteinExistence type="inferred from homology"/>
<reference key="1">
    <citation type="journal article" date="2019" name="Org. Lett.">
        <title>Targeted gene inactivations expose silent cytochalasans in Magnaporthe grisea NI980.</title>
        <authorList>
            <person name="Wang C."/>
            <person name="Hantke V."/>
            <person name="Cox R.J."/>
            <person name="Skellam E."/>
        </authorList>
    </citation>
    <scope>NUCLEOTIDE SEQUENCE [GENOMIC DNA]</scope>
    <scope>FUNCTION</scope>
    <scope>DISRUPTION PHENOTYPE</scope>
    <scope>PATHWAY</scope>
    <source>
        <strain>NI980</strain>
    </source>
</reference>
<reference key="2">
    <citation type="journal article" date="2019" name="Org. Lett.">
        <title>Investigating the function of cryptic cytochalasan cytochrome P450 monooxygenases using combinatorial biosynthesis.</title>
        <authorList>
            <person name="Wang C."/>
            <person name="Becker K."/>
            <person name="Pfuetze S."/>
            <person name="Kuhnert E."/>
            <person name="Stadler M."/>
            <person name="Cox R.J."/>
            <person name="Skellam E."/>
        </authorList>
    </citation>
    <scope>FUNCTION</scope>
</reference>
<reference key="3">
    <citation type="journal article" date="2020" name="Chem. Commun. (Camb.)">
        <title>Evidence for enzyme catalysed intramolecular [4+2] Diels-Alder cyclization during the biosynthesis of pyrichalasin H.</title>
        <authorList>
            <person name="Hantke V."/>
            <person name="Skellam E.J."/>
            <person name="Cox R.J."/>
        </authorList>
    </citation>
    <scope>FUNCTION</scope>
</reference>
<keyword id="KW-0349">Heme</keyword>
<keyword id="KW-0408">Iron</keyword>
<keyword id="KW-0479">Metal-binding</keyword>
<keyword id="KW-0503">Monooxygenase</keyword>
<keyword id="KW-0560">Oxidoreductase</keyword>
<keyword id="KW-1185">Reference proteome</keyword>
<keyword id="KW-0732">Signal</keyword>
<dbReference type="EC" id="1.-.-.-" evidence="7"/>
<dbReference type="EMBL" id="MK801691">
    <property type="protein sequence ID" value="QCS37514.1"/>
    <property type="molecule type" value="Genomic_DNA"/>
</dbReference>
<dbReference type="SMR" id="A0A4V1FW34"/>
<dbReference type="Proteomes" id="UP000515153">
    <property type="component" value="Unplaced"/>
</dbReference>
<dbReference type="GO" id="GO:0020037">
    <property type="term" value="F:heme binding"/>
    <property type="evidence" value="ECO:0007669"/>
    <property type="project" value="InterPro"/>
</dbReference>
<dbReference type="GO" id="GO:0005506">
    <property type="term" value="F:iron ion binding"/>
    <property type="evidence" value="ECO:0007669"/>
    <property type="project" value="InterPro"/>
</dbReference>
<dbReference type="GO" id="GO:0004497">
    <property type="term" value="F:monooxygenase activity"/>
    <property type="evidence" value="ECO:0007669"/>
    <property type="project" value="UniProtKB-KW"/>
</dbReference>
<dbReference type="GO" id="GO:0016705">
    <property type="term" value="F:oxidoreductase activity, acting on paired donors, with incorporation or reduction of molecular oxygen"/>
    <property type="evidence" value="ECO:0007669"/>
    <property type="project" value="InterPro"/>
</dbReference>
<dbReference type="GO" id="GO:0019748">
    <property type="term" value="P:secondary metabolic process"/>
    <property type="evidence" value="ECO:0007669"/>
    <property type="project" value="UniProtKB-ARBA"/>
</dbReference>
<dbReference type="CDD" id="cd11041">
    <property type="entry name" value="CYP503A1-like"/>
    <property type="match status" value="1"/>
</dbReference>
<dbReference type="Gene3D" id="1.10.630.10">
    <property type="entry name" value="Cytochrome P450"/>
    <property type="match status" value="1"/>
</dbReference>
<dbReference type="InterPro" id="IPR001128">
    <property type="entry name" value="Cyt_P450"/>
</dbReference>
<dbReference type="InterPro" id="IPR017972">
    <property type="entry name" value="Cyt_P450_CS"/>
</dbReference>
<dbReference type="InterPro" id="IPR002403">
    <property type="entry name" value="Cyt_P450_E_grp-IV"/>
</dbReference>
<dbReference type="InterPro" id="IPR036396">
    <property type="entry name" value="Cyt_P450_sf"/>
</dbReference>
<dbReference type="PANTHER" id="PTHR46206">
    <property type="entry name" value="CYTOCHROME P450"/>
    <property type="match status" value="1"/>
</dbReference>
<dbReference type="PANTHER" id="PTHR46206:SF7">
    <property type="entry name" value="P450, PUTATIVE (EUROFUNG)-RELATED"/>
    <property type="match status" value="1"/>
</dbReference>
<dbReference type="Pfam" id="PF00067">
    <property type="entry name" value="p450"/>
    <property type="match status" value="1"/>
</dbReference>
<dbReference type="PRINTS" id="PR00465">
    <property type="entry name" value="EP450IV"/>
</dbReference>
<dbReference type="SUPFAM" id="SSF48264">
    <property type="entry name" value="Cytochrome P450"/>
    <property type="match status" value="1"/>
</dbReference>
<dbReference type="PROSITE" id="PS00086">
    <property type="entry name" value="CYTOCHROME_P450"/>
    <property type="match status" value="1"/>
</dbReference>
<organism>
    <name type="scientific">Pyricularia grisea</name>
    <name type="common">Crabgrass-specific blast fungus</name>
    <name type="synonym">Magnaporthe grisea</name>
    <dbReference type="NCBI Taxonomy" id="148305"/>
    <lineage>
        <taxon>Eukaryota</taxon>
        <taxon>Fungi</taxon>
        <taxon>Dikarya</taxon>
        <taxon>Ascomycota</taxon>
        <taxon>Pezizomycotina</taxon>
        <taxon>Sordariomycetes</taxon>
        <taxon>Sordariomycetidae</taxon>
        <taxon>Magnaporthales</taxon>
        <taxon>Pyriculariaceae</taxon>
        <taxon>Pyricularia</taxon>
    </lineage>
</organism>
<gene>
    <name evidence="5" type="primary">pyiG</name>
</gene>
<name>PYIG_PYRGI</name>
<comment type="function">
    <text evidence="3 4 8">Cytochrome P450 monooxygenase; part of the gene cluster that mediates the biosynthesis of the mycotoxin pyrichalasin H, a tyrosine-derived cytochalasan that inhibits the growth of rice seedlings, but also inhibits lymphocyte capping and actin polymerization and alters cell morphology (Probable) (PubMed:31099577). Pyrichalasin H is indicated as the responsible agent for the genus-specific pathogenicity of M.grisea toward crabgrass (PubMed:31099577). The first step in the pathway is catalyzed by the O-methyltransferase pyiA which methylates free tyrosine to generate the precursor O-methyltyrosine (PubMed:31099577). The hybrid PKS-NRPS pyiS, assisted by the enoyl reductase pyiC, are responsible for fusion of the O-methyltyrosine precursor and the polyketide backbone (PubMed:31099577). The polyketide synthase module (PKS) of pyiS is responsible for the synthesis of the polyketide backbone and the downstream nonribosomal peptide synthetase (NRPS) amidates the carboxyl end of the polyketide with the O-methyltyrosine precursor (PubMed:31099577). As the NRPS A-domain demonstrates substrate tolerance, pyiS can also use phenylalanine, tyrosine and even para-chlorophenylalanine as amino acid precursor, which leads to the production of novel cytochalasans, including halogenated cytochalasans (PubMed:31099577). Because pyiS lacks a designated enoylreductase (ER) domain, the required activity is provided the enoyl reductase pyiC (PubMed:31099577). Reduction by the hydrolyase pyiE leads to 1,5-dihydropyrrolone, which is substrate for dehydration and intra-molecular Diels-Alder cyclization by the Diels-Alderase pyiF to yield the required isoindolone-fused macrocycle (PubMed:32039410). The tailoring cytochrome P450 monooxygenases piyD and piyG catalyze the hydroxylation at C-18 and C-7, respectivily, whereas the short-chain dehydrogenase/reductase pyiH reduces the carbonyl at C-21 in preparation for the transfer of an acetyl group by the acetyltransferase pyiB (PubMed:31099577). These 3 reactions whose order is not clear yet, lead to the production of O-methylpyrichalasin J, a deacetylated pyrichalasin H (PubMed:31099577). Finally, pyiB to converts O-methylpyrichalasin J into the final product pyrichalasin H via acetylation of C-21 (PubMed:31099577).</text>
</comment>
<comment type="cofactor">
    <cofactor evidence="1">
        <name>heme</name>
        <dbReference type="ChEBI" id="CHEBI:30413"/>
    </cofactor>
</comment>
<comment type="pathway">
    <text evidence="7">Mycotoxin biosynthesis.</text>
</comment>
<comment type="disruption phenotype">
    <text evidence="3">Leads to the loss of pyrichalasin H production, but accumulates novel cytochalasans, all lacking a hydroxyl group at C-7.</text>
</comment>
<comment type="similarity">
    <text evidence="6">Belongs to the cytochrome P450 family.</text>
</comment>
<sequence length="504" mass="57662">MLNSAACIVLAITAVLGRMIYTHFYSNTCAAMKRALAHIPELHFEEDDTPERYRTETRSLVRKGYERYLQYGIPFQMRNPVSELGNQVVLPVKYLEEVKRAPRSLYSFEAFSEKVFLLKYIDAPRQTDALLYAVKLDINKNMDHILNGLWDETQVLLKETVPVTGQITIPGGELACNIIARTMSYVLVGPSLCRNPEWTKIAIEATFALVAGTQGLRDRYSPGWRWLARFQRSSEKLGEVREKAMELIKPLHEERMKALKDDSGQFRNFYDTIFWTMNKRKVDRSLRAIVDQQLFLTLASIHTTAGTLQSILCDWLAHPEYHDEILAEINERLAAFKGAGGKWTQQEVNEMKKLDSFMKESTRVNPVGCMTVQRYAQRTHTFSDGFVLPAGTIFQFPSDAVHHDPKLFPDPEKFDGHRFLRLREKDANAYHYGYVSDTTLNWGAGTHACPGRFLATYVLKFAFIALITQYDLSFPEGTGKPGYFYFDNSVRIDPTAKLDIKKSS</sequence>